<reference key="1">
    <citation type="journal article" date="2006" name="BMC Genomics">
        <title>Complete genome sequence of Shigella flexneri 5b and comparison with Shigella flexneri 2a.</title>
        <authorList>
            <person name="Nie H."/>
            <person name="Yang F."/>
            <person name="Zhang X."/>
            <person name="Yang J."/>
            <person name="Chen L."/>
            <person name="Wang J."/>
            <person name="Xiong Z."/>
            <person name="Peng J."/>
            <person name="Sun L."/>
            <person name="Dong J."/>
            <person name="Xue Y."/>
            <person name="Xu X."/>
            <person name="Chen S."/>
            <person name="Yao Z."/>
            <person name="Shen Y."/>
            <person name="Jin Q."/>
        </authorList>
    </citation>
    <scope>NUCLEOTIDE SEQUENCE [LARGE SCALE GENOMIC DNA]</scope>
    <source>
        <strain>8401</strain>
    </source>
</reference>
<keyword id="KW-0963">Cytoplasm</keyword>
<keyword id="KW-0574">Periplasm</keyword>
<keyword id="KW-0732">Signal</keyword>
<evidence type="ECO:0000255" key="1">
    <source>
        <dbReference type="HAMAP-Rule" id="MF_01332"/>
    </source>
</evidence>
<evidence type="ECO:0000305" key="2"/>
<gene>
    <name evidence="1" type="primary">secM</name>
    <name type="ordered locus">SFV_0090</name>
</gene>
<sequence length="170" mass="18880">MSGILTRWRQFGKRYFWPHLLLGMVAASLGLPALSNAAEPNAPAKATTRNHEPSAKVNFGQLALLEANTRRPNSNYSVDYWHQHAIRTVIRHLSFAMAPQTLPVAEESLPLQAQHLALLDTLSALLTQEGTPSEKGYRIDYAHFTPQAKFSTPVWISQAQGIRAGPQRLT</sequence>
<feature type="signal peptide" evidence="1">
    <location>
        <begin position="1"/>
        <end position="37"/>
    </location>
</feature>
<feature type="chain" id="PRO_0000314450" description="Secretion monitor">
    <location>
        <begin position="38"/>
        <end position="170"/>
    </location>
</feature>
<comment type="function">
    <text evidence="1">Regulates secA expression by translational coupling of the secM secA operon. Translational pausing at a specific Pro residue 5 residues before the end of the protein may allow disruption of a mRNA repressor helix that normally suppresses secA translation initiation.</text>
</comment>
<comment type="subcellular location">
    <subcellularLocation>
        <location evidence="1">Cytoplasm</location>
        <location evidence="1">Cytosol</location>
    </subcellularLocation>
    <subcellularLocation>
        <location evidence="1">Periplasm</location>
    </subcellularLocation>
    <text evidence="1">The active form is cytosolic, while the periplasmic form is rapidly degraded, mainly by the tail-specific protease.</text>
</comment>
<comment type="similarity">
    <text evidence="1">Belongs to the SecM family.</text>
</comment>
<comment type="sequence caution" evidence="2">
    <conflict type="erroneous initiation">
        <sequence resource="EMBL-CDS" id="ABF02376"/>
    </conflict>
</comment>
<name>SECM_SHIF8</name>
<accession>Q0T8A0</accession>
<organism>
    <name type="scientific">Shigella flexneri serotype 5b (strain 8401)</name>
    <dbReference type="NCBI Taxonomy" id="373384"/>
    <lineage>
        <taxon>Bacteria</taxon>
        <taxon>Pseudomonadati</taxon>
        <taxon>Pseudomonadota</taxon>
        <taxon>Gammaproteobacteria</taxon>
        <taxon>Enterobacterales</taxon>
        <taxon>Enterobacteriaceae</taxon>
        <taxon>Shigella</taxon>
    </lineage>
</organism>
<dbReference type="EMBL" id="CP000266">
    <property type="protein sequence ID" value="ABF02376.1"/>
    <property type="status" value="ALT_INIT"/>
    <property type="molecule type" value="Genomic_DNA"/>
</dbReference>
<dbReference type="RefSeq" id="WP_000014321.1">
    <property type="nucleotide sequence ID" value="NC_008258.1"/>
</dbReference>
<dbReference type="SMR" id="Q0T8A0"/>
<dbReference type="GeneID" id="93777337"/>
<dbReference type="KEGG" id="sfv:SFV_0090"/>
<dbReference type="HOGENOM" id="CLU_108853_0_0_6"/>
<dbReference type="Proteomes" id="UP000000659">
    <property type="component" value="Chromosome"/>
</dbReference>
<dbReference type="GO" id="GO:0005829">
    <property type="term" value="C:cytosol"/>
    <property type="evidence" value="ECO:0007669"/>
    <property type="project" value="UniProtKB-SubCell"/>
</dbReference>
<dbReference type="GO" id="GO:0042597">
    <property type="term" value="C:periplasmic space"/>
    <property type="evidence" value="ECO:0007669"/>
    <property type="project" value="UniProtKB-SubCell"/>
</dbReference>
<dbReference type="GO" id="GO:0045182">
    <property type="term" value="F:translation regulator activity"/>
    <property type="evidence" value="ECO:0007669"/>
    <property type="project" value="InterPro"/>
</dbReference>
<dbReference type="HAMAP" id="MF_01332">
    <property type="entry name" value="SecM"/>
    <property type="match status" value="1"/>
</dbReference>
<dbReference type="InterPro" id="IPR009502">
    <property type="entry name" value="SecM"/>
</dbReference>
<dbReference type="NCBIfam" id="NF002799">
    <property type="entry name" value="PRK02943.1-1"/>
    <property type="match status" value="1"/>
</dbReference>
<dbReference type="Pfam" id="PF06558">
    <property type="entry name" value="SecM"/>
    <property type="match status" value="1"/>
</dbReference>
<dbReference type="PIRSF" id="PIRSF004572">
    <property type="entry name" value="SecM"/>
    <property type="match status" value="1"/>
</dbReference>
<proteinExistence type="inferred from homology"/>
<protein>
    <recommendedName>
        <fullName evidence="1">Secretion monitor</fullName>
    </recommendedName>
</protein>